<reference key="1">
    <citation type="journal article" date="2009" name="Sci. China, Ser. C, Life Sci.">
        <title>The CXXC finger 5 protein is required for DNA damage-induced p53 activation.</title>
        <authorList>
            <person name="Zhang M."/>
            <person name="Wang R.-P."/>
            <person name="Wang Y.-Y."/>
            <person name="Diao F."/>
            <person name="Gao D."/>
            <person name="Chen D.-Y."/>
            <person name="Zhai Z."/>
            <person name="Shu H.-B."/>
        </authorList>
    </citation>
    <scope>NUCLEOTIDE SEQUENCE [MRNA] (ISOFORM 1)</scope>
    <scope>FUNCTION</scope>
    <scope>SUBCELLULAR LOCATION</scope>
</reference>
<reference key="2">
    <citation type="journal article" date="2003" name="Oncogene">
        <title>Large-scale identification and characterization of human genes that activate NF-kappaB and MAPK signaling pathways.</title>
        <authorList>
            <person name="Matsuda A."/>
            <person name="Suzuki Y."/>
            <person name="Honda G."/>
            <person name="Muramatsu S."/>
            <person name="Matsuzaki O."/>
            <person name="Nagano Y."/>
            <person name="Doi T."/>
            <person name="Shimotohno K."/>
            <person name="Harada T."/>
            <person name="Nishida E."/>
            <person name="Hayashi H."/>
            <person name="Sugano S."/>
        </authorList>
    </citation>
    <scope>NUCLEOTIDE SEQUENCE [LARGE SCALE MRNA] (ISOFORM 1)</scope>
    <scope>POSSIBLE FUNCTION</scope>
    <source>
        <tissue>Lung</tissue>
    </source>
</reference>
<reference key="3">
    <citation type="journal article" date="2004" name="Nat. Genet.">
        <title>Complete sequencing and characterization of 21,243 full-length human cDNAs.</title>
        <authorList>
            <person name="Ota T."/>
            <person name="Suzuki Y."/>
            <person name="Nishikawa T."/>
            <person name="Otsuki T."/>
            <person name="Sugiyama T."/>
            <person name="Irie R."/>
            <person name="Wakamatsu A."/>
            <person name="Hayashi K."/>
            <person name="Sato H."/>
            <person name="Nagai K."/>
            <person name="Kimura K."/>
            <person name="Makita H."/>
            <person name="Sekine M."/>
            <person name="Obayashi M."/>
            <person name="Nishi T."/>
            <person name="Shibahara T."/>
            <person name="Tanaka T."/>
            <person name="Ishii S."/>
            <person name="Yamamoto J."/>
            <person name="Saito K."/>
            <person name="Kawai Y."/>
            <person name="Isono Y."/>
            <person name="Nakamura Y."/>
            <person name="Nagahari K."/>
            <person name="Murakami K."/>
            <person name="Yasuda T."/>
            <person name="Iwayanagi T."/>
            <person name="Wagatsuma M."/>
            <person name="Shiratori A."/>
            <person name="Sudo H."/>
            <person name="Hosoiri T."/>
            <person name="Kaku Y."/>
            <person name="Kodaira H."/>
            <person name="Kondo H."/>
            <person name="Sugawara M."/>
            <person name="Takahashi M."/>
            <person name="Kanda K."/>
            <person name="Yokoi T."/>
            <person name="Furuya T."/>
            <person name="Kikkawa E."/>
            <person name="Omura Y."/>
            <person name="Abe K."/>
            <person name="Kamihara K."/>
            <person name="Katsuta N."/>
            <person name="Sato K."/>
            <person name="Tanikawa M."/>
            <person name="Yamazaki M."/>
            <person name="Ninomiya K."/>
            <person name="Ishibashi T."/>
            <person name="Yamashita H."/>
            <person name="Murakawa K."/>
            <person name="Fujimori K."/>
            <person name="Tanai H."/>
            <person name="Kimata M."/>
            <person name="Watanabe M."/>
            <person name="Hiraoka S."/>
            <person name="Chiba Y."/>
            <person name="Ishida S."/>
            <person name="Ono Y."/>
            <person name="Takiguchi S."/>
            <person name="Watanabe S."/>
            <person name="Yosida M."/>
            <person name="Hotuta T."/>
            <person name="Kusano J."/>
            <person name="Kanehori K."/>
            <person name="Takahashi-Fujii A."/>
            <person name="Hara H."/>
            <person name="Tanase T.-O."/>
            <person name="Nomura Y."/>
            <person name="Togiya S."/>
            <person name="Komai F."/>
            <person name="Hara R."/>
            <person name="Takeuchi K."/>
            <person name="Arita M."/>
            <person name="Imose N."/>
            <person name="Musashino K."/>
            <person name="Yuuki H."/>
            <person name="Oshima A."/>
            <person name="Sasaki N."/>
            <person name="Aotsuka S."/>
            <person name="Yoshikawa Y."/>
            <person name="Matsunawa H."/>
            <person name="Ichihara T."/>
            <person name="Shiohata N."/>
            <person name="Sano S."/>
            <person name="Moriya S."/>
            <person name="Momiyama H."/>
            <person name="Satoh N."/>
            <person name="Takami S."/>
            <person name="Terashima Y."/>
            <person name="Suzuki O."/>
            <person name="Nakagawa S."/>
            <person name="Senoh A."/>
            <person name="Mizoguchi H."/>
            <person name="Goto Y."/>
            <person name="Shimizu F."/>
            <person name="Wakebe H."/>
            <person name="Hishigaki H."/>
            <person name="Watanabe T."/>
            <person name="Sugiyama A."/>
            <person name="Takemoto M."/>
            <person name="Kawakami B."/>
            <person name="Yamazaki M."/>
            <person name="Watanabe K."/>
            <person name="Kumagai A."/>
            <person name="Itakura S."/>
            <person name="Fukuzumi Y."/>
            <person name="Fujimori Y."/>
            <person name="Komiyama M."/>
            <person name="Tashiro H."/>
            <person name="Tanigami A."/>
            <person name="Fujiwara T."/>
            <person name="Ono T."/>
            <person name="Yamada K."/>
            <person name="Fujii Y."/>
            <person name="Ozaki K."/>
            <person name="Hirao M."/>
            <person name="Ohmori Y."/>
            <person name="Kawabata A."/>
            <person name="Hikiji T."/>
            <person name="Kobatake N."/>
            <person name="Inagaki H."/>
            <person name="Ikema Y."/>
            <person name="Okamoto S."/>
            <person name="Okitani R."/>
            <person name="Kawakami T."/>
            <person name="Noguchi S."/>
            <person name="Itoh T."/>
            <person name="Shigeta K."/>
            <person name="Senba T."/>
            <person name="Matsumura K."/>
            <person name="Nakajima Y."/>
            <person name="Mizuno T."/>
            <person name="Morinaga M."/>
            <person name="Sasaki M."/>
            <person name="Togashi T."/>
            <person name="Oyama M."/>
            <person name="Hata H."/>
            <person name="Watanabe M."/>
            <person name="Komatsu T."/>
            <person name="Mizushima-Sugano J."/>
            <person name="Satoh T."/>
            <person name="Shirai Y."/>
            <person name="Takahashi Y."/>
            <person name="Nakagawa K."/>
            <person name="Okumura K."/>
            <person name="Nagase T."/>
            <person name="Nomura N."/>
            <person name="Kikuchi H."/>
            <person name="Masuho Y."/>
            <person name="Yamashita R."/>
            <person name="Nakai K."/>
            <person name="Yada T."/>
            <person name="Nakamura Y."/>
            <person name="Ohara O."/>
            <person name="Isogai T."/>
            <person name="Sugano S."/>
        </authorList>
    </citation>
    <scope>NUCLEOTIDE SEQUENCE [LARGE SCALE MRNA] (ISOFORMS 1 AND 2)</scope>
    <source>
        <tissue>Ovarian carcinoma</tissue>
        <tissue>Placenta</tissue>
    </source>
</reference>
<reference key="4">
    <citation type="submission" date="2000-07" db="EMBL/GenBank/DDBJ databases">
        <title>Pediatric leukemia cDNA sequencing project.</title>
        <authorList>
            <person name="Zhou J."/>
            <person name="Yu W."/>
            <person name="Tang H."/>
            <person name="Mei G."/>
            <person name="Tsang Y.T.M."/>
            <person name="Bouck J."/>
            <person name="Gibbs R.A."/>
            <person name="Margolin J.F."/>
        </authorList>
    </citation>
    <scope>NUCLEOTIDE SEQUENCE [LARGE SCALE MRNA] (ISOFORM 2)</scope>
    <source>
        <tissue>Leukemia</tissue>
    </source>
</reference>
<reference key="5">
    <citation type="journal article" date="2004" name="Nature">
        <title>The DNA sequence and comparative analysis of human chromosome 5.</title>
        <authorList>
            <person name="Schmutz J."/>
            <person name="Martin J."/>
            <person name="Terry A."/>
            <person name="Couronne O."/>
            <person name="Grimwood J."/>
            <person name="Lowry S."/>
            <person name="Gordon L.A."/>
            <person name="Scott D."/>
            <person name="Xie G."/>
            <person name="Huang W."/>
            <person name="Hellsten U."/>
            <person name="Tran-Gyamfi M."/>
            <person name="She X."/>
            <person name="Prabhakar S."/>
            <person name="Aerts A."/>
            <person name="Altherr M."/>
            <person name="Bajorek E."/>
            <person name="Black S."/>
            <person name="Branscomb E."/>
            <person name="Caoile C."/>
            <person name="Challacombe J.F."/>
            <person name="Chan Y.M."/>
            <person name="Denys M."/>
            <person name="Detter J.C."/>
            <person name="Escobar J."/>
            <person name="Flowers D."/>
            <person name="Fotopulos D."/>
            <person name="Glavina T."/>
            <person name="Gomez M."/>
            <person name="Gonzales E."/>
            <person name="Goodstein D."/>
            <person name="Grigoriev I."/>
            <person name="Groza M."/>
            <person name="Hammon N."/>
            <person name="Hawkins T."/>
            <person name="Haydu L."/>
            <person name="Israni S."/>
            <person name="Jett J."/>
            <person name="Kadner K."/>
            <person name="Kimball H."/>
            <person name="Kobayashi A."/>
            <person name="Lopez F."/>
            <person name="Lou Y."/>
            <person name="Martinez D."/>
            <person name="Medina C."/>
            <person name="Morgan J."/>
            <person name="Nandkeshwar R."/>
            <person name="Noonan J.P."/>
            <person name="Pitluck S."/>
            <person name="Pollard M."/>
            <person name="Predki P."/>
            <person name="Priest J."/>
            <person name="Ramirez L."/>
            <person name="Retterer J."/>
            <person name="Rodriguez A."/>
            <person name="Rogers S."/>
            <person name="Salamov A."/>
            <person name="Salazar A."/>
            <person name="Thayer N."/>
            <person name="Tice H."/>
            <person name="Tsai M."/>
            <person name="Ustaszewska A."/>
            <person name="Vo N."/>
            <person name="Wheeler J."/>
            <person name="Wu K."/>
            <person name="Yang J."/>
            <person name="Dickson M."/>
            <person name="Cheng J.-F."/>
            <person name="Eichler E.E."/>
            <person name="Olsen A."/>
            <person name="Pennacchio L.A."/>
            <person name="Rokhsar D.S."/>
            <person name="Richardson P."/>
            <person name="Lucas S.M."/>
            <person name="Myers R.M."/>
            <person name="Rubin E.M."/>
        </authorList>
    </citation>
    <scope>NUCLEOTIDE SEQUENCE [LARGE SCALE GENOMIC DNA]</scope>
</reference>
<reference key="6">
    <citation type="submission" date="2005-09" db="EMBL/GenBank/DDBJ databases">
        <authorList>
            <person name="Mural R.J."/>
            <person name="Istrail S."/>
            <person name="Sutton G.G."/>
            <person name="Florea L."/>
            <person name="Halpern A.L."/>
            <person name="Mobarry C.M."/>
            <person name="Lippert R."/>
            <person name="Walenz B."/>
            <person name="Shatkay H."/>
            <person name="Dew I."/>
            <person name="Miller J.R."/>
            <person name="Flanigan M.J."/>
            <person name="Edwards N.J."/>
            <person name="Bolanos R."/>
            <person name="Fasulo D."/>
            <person name="Halldorsson B.V."/>
            <person name="Hannenhalli S."/>
            <person name="Turner R."/>
            <person name="Yooseph S."/>
            <person name="Lu F."/>
            <person name="Nusskern D.R."/>
            <person name="Shue B.C."/>
            <person name="Zheng X.H."/>
            <person name="Zhong F."/>
            <person name="Delcher A.L."/>
            <person name="Huson D.H."/>
            <person name="Kravitz S.A."/>
            <person name="Mouchard L."/>
            <person name="Reinert K."/>
            <person name="Remington K.A."/>
            <person name="Clark A.G."/>
            <person name="Waterman M.S."/>
            <person name="Eichler E.E."/>
            <person name="Adams M.D."/>
            <person name="Hunkapiller M.W."/>
            <person name="Myers E.W."/>
            <person name="Venter J.C."/>
        </authorList>
    </citation>
    <scope>NUCLEOTIDE SEQUENCE [LARGE SCALE GENOMIC DNA]</scope>
</reference>
<reference key="7">
    <citation type="journal article" date="2004" name="Genome Res.">
        <title>The status, quality, and expansion of the NIH full-length cDNA project: the Mammalian Gene Collection (MGC).</title>
        <authorList>
            <consortium name="The MGC Project Team"/>
        </authorList>
    </citation>
    <scope>NUCLEOTIDE SEQUENCE [LARGE SCALE MRNA] (ISOFORM 1)</scope>
    <source>
        <tissue>Eye</tissue>
        <tissue>Lymph</tissue>
        <tissue>Muscle</tissue>
        <tissue>Placenta</tissue>
        <tissue>Skin</tissue>
    </source>
</reference>
<reference key="8">
    <citation type="journal article" date="2000" name="Genome Res.">
        <title>Cloning and functional analysis of cDNAs with open reading frames for 300 previously undefined genes expressed in CD34+ hematopoietic stem/progenitor cells.</title>
        <authorList>
            <person name="Zhang Q.-H."/>
            <person name="Ye M."/>
            <person name="Wu X.-Y."/>
            <person name="Ren S.-X."/>
            <person name="Zhao M."/>
            <person name="Zhao C.-J."/>
            <person name="Fu G."/>
            <person name="Shen Y."/>
            <person name="Fan H.-Y."/>
            <person name="Lu G."/>
            <person name="Zhong M."/>
            <person name="Xu X.-R."/>
            <person name="Han Z.-G."/>
            <person name="Zhang J.-W."/>
            <person name="Tao J."/>
            <person name="Huang Q.-H."/>
            <person name="Zhou J."/>
            <person name="Hu G.-X."/>
            <person name="Gu J."/>
            <person name="Chen S.-J."/>
            <person name="Chen Z."/>
        </authorList>
    </citation>
    <scope>NUCLEOTIDE SEQUENCE [LARGE SCALE MRNA] OF 33-322 (ISOFORM 1)</scope>
    <source>
        <tissue>Umbilical cord blood</tissue>
    </source>
</reference>
<reference key="9">
    <citation type="journal article" date="2009" name="Blood">
        <title>Functional involvement of RINF, retinoid-inducible nuclear factor (CXXC5), in normal and tumoral human myelopoiesis.</title>
        <authorList>
            <person name="Pendino F."/>
            <person name="Nguyen E."/>
            <person name="Jonassen I."/>
            <person name="Dysvik B."/>
            <person name="Azouz A."/>
            <person name="Lanotte M."/>
            <person name="Segal-Bendirdjian E."/>
            <person name="Lillehaug J.R."/>
        </authorList>
    </citation>
    <scope>FUNCTION</scope>
    <scope>INDUCTION BY RETINOIDS</scope>
    <scope>SUBCELLULAR LOCATION</scope>
</reference>
<reference key="10">
    <citation type="journal article" date="2013" name="J. Proteome Res.">
        <title>Toward a comprehensive characterization of a human cancer cell phosphoproteome.</title>
        <authorList>
            <person name="Zhou H."/>
            <person name="Di Palma S."/>
            <person name="Preisinger C."/>
            <person name="Peng M."/>
            <person name="Polat A.N."/>
            <person name="Heck A.J."/>
            <person name="Mohammed S."/>
        </authorList>
    </citation>
    <scope>PHOSPHORYLATION [LARGE SCALE ANALYSIS] AT THR-53</scope>
    <scope>IDENTIFICATION BY MASS SPECTROMETRY [LARGE SCALE ANALYSIS]</scope>
    <source>
        <tissue>Erythroleukemia</tissue>
    </source>
</reference>
<reference key="11">
    <citation type="journal article" date="2013" name="Nucleic Acids Res.">
        <title>Oxygen-dependent expression of cytochrome c oxidase subunit 4-2 gene expression is mediated by transcription factors RBPJ, CXXC5 and CHCHD2.</title>
        <authorList>
            <person name="Aras S."/>
            <person name="Pak O."/>
            <person name="Sommer N."/>
            <person name="Finley R. Jr."/>
            <person name="Huttemann M."/>
            <person name="Weissmann N."/>
            <person name="Grossman L.I."/>
        </authorList>
    </citation>
    <scope>FUNCTION IN COX4I2 TRANSCRIPTION</scope>
    <scope>INTERACTION WITH RBPJ</scope>
</reference>
<reference evidence="12" key="12">
    <citation type="journal article" date="2018" name="Structure">
        <title>DNA Sequence Recognition of Human CXXC Domains and Their Structural Determinants.</title>
        <authorList>
            <person name="Xu C."/>
            <person name="Liu K."/>
            <person name="Lei M."/>
            <person name="Yang A."/>
            <person name="Li Y."/>
            <person name="Hughes T.R."/>
            <person name="Min J."/>
        </authorList>
    </citation>
    <scope>X-RAY CRYSTALLOGRAPHY (2.10 ANGSTROMS) OF 254-306 IN COMPLEX WITH CPG DNA</scope>
    <scope>FUNCTION</scope>
    <scope>DOMAIN CXXC-TYPE ZINC-FINGER</scope>
    <scope>ZINC-BINDING</scope>
</reference>
<comment type="function">
    <text evidence="1 5 6 7 8">May indirectly participate in activation of the NF-kappa-B and MAPK pathways. Acts as a mediator of BMP4-mediated modulation of canonical Wnt signaling activity in neural stem cells (By similarity). Required for DNA damage-induced ATM phosphorylation, p53 activation and cell cycle arrest. Involved in myelopoiesis. Transcription factor. Binds to the oxygen responsive element of COX4I2 and represses its transcription under hypoxia conditions (4% oxygen), as well as normoxia conditions (20% oxygen) (PubMed:23303788). May repress COX4I2 transactivation induced by CHCHD2 and RBPJ (PubMed:23303788). Binds preferentially to DNA containing cytidine-phosphate-guanosine (CpG) dinucleotides over CpH (H=A, T, and C), hemimethylated-CpG and hemimethylated-hydroxymethyl-CpG (PubMed:29276034).</text>
</comment>
<comment type="subunit">
    <text evidence="1 7">Interacts with DVL1. Interacts with RBPJ (PubMed:23303788).</text>
</comment>
<comment type="subcellular location">
    <subcellularLocation>
        <location evidence="5 6">Nucleus</location>
    </subcellularLocation>
    <subcellularLocation>
        <location evidence="1">Cytoplasm</location>
    </subcellularLocation>
    <text evidence="1">Colocalizes with DVL1 in large bodies localized just outside the nuclear membrane.</text>
</comment>
<comment type="alternative products">
    <event type="alternative splicing"/>
    <isoform>
        <id>Q7LFL8-1</id>
        <name>1</name>
        <sequence type="displayed"/>
    </isoform>
    <isoform>
        <id>Q7LFL8-2</id>
        <name>2</name>
        <sequence type="described" ref="VSP_031013"/>
    </isoform>
</comment>
<comment type="induction">
    <text evidence="5">By retinoic acid.</text>
</comment>
<comment type="domain">
    <text evidence="8">The CXXC zinc finger mediates binding to CpG-DNA.</text>
</comment>
<comment type="sequence caution" evidence="11">
    <conflict type="frameshift">
        <sequence resource="EMBL-CDS" id="AAF36115"/>
    </conflict>
</comment>
<comment type="sequence caution" evidence="11">
    <conflict type="erroneous initiation">
        <sequence resource="EMBL-CDS" id="AAH02490"/>
    </conflict>
</comment>
<comment type="sequence caution" evidence="11">
    <conflict type="erroneous initiation">
        <sequence resource="EMBL-CDS" id="AAH06428"/>
    </conflict>
</comment>
<comment type="sequence caution" evidence="11">
    <conflict type="erroneous initiation">
        <sequence resource="EMBL-CDS" id="AAH17439"/>
    </conflict>
</comment>
<comment type="sequence caution" evidence="11">
    <conflict type="erroneous initiation">
        <sequence resource="EMBL-CDS" id="AAH24040"/>
    </conflict>
</comment>
<comment type="sequence caution" evidence="11">
    <conflict type="erroneous initiation">
        <sequence resource="EMBL-CDS" id="AAH41013"/>
    </conflict>
</comment>
<proteinExistence type="evidence at protein level"/>
<keyword id="KW-0002">3D-structure</keyword>
<keyword id="KW-0025">Alternative splicing</keyword>
<keyword id="KW-0963">Cytoplasm</keyword>
<keyword id="KW-0238">DNA-binding</keyword>
<keyword id="KW-0479">Metal-binding</keyword>
<keyword id="KW-0539">Nucleus</keyword>
<keyword id="KW-0597">Phosphoprotein</keyword>
<keyword id="KW-1267">Proteomics identification</keyword>
<keyword id="KW-1185">Reference proteome</keyword>
<keyword id="KW-0678">Repressor</keyword>
<keyword id="KW-0804">Transcription</keyword>
<keyword id="KW-0862">Zinc</keyword>
<keyword id="KW-0863">Zinc-finger</keyword>
<organism>
    <name type="scientific">Homo sapiens</name>
    <name type="common">Human</name>
    <dbReference type="NCBI Taxonomy" id="9606"/>
    <lineage>
        <taxon>Eukaryota</taxon>
        <taxon>Metazoa</taxon>
        <taxon>Chordata</taxon>
        <taxon>Craniata</taxon>
        <taxon>Vertebrata</taxon>
        <taxon>Euteleostomi</taxon>
        <taxon>Mammalia</taxon>
        <taxon>Eutheria</taxon>
        <taxon>Euarchontoglires</taxon>
        <taxon>Primates</taxon>
        <taxon>Haplorrhini</taxon>
        <taxon>Catarrhini</taxon>
        <taxon>Hominidae</taxon>
        <taxon>Homo</taxon>
    </lineage>
</organism>
<sequence length="322" mass="32977">MSSLGGGSQDAGGSSSSSTNGSGGSGSSGPKAGAADKSAVVAAAAPASVADDTPPPERRNKSGIISEPLNKSLRRSRPLSHYSSFGSSGGSGGGSMMGGESADKATAAAAAASLLANGHDLAAAMAVDKSNPTSKHKSGAVASLLSKAERATELAAEGQLTLQQFAQSTEMLKRVVQEHLPLMSEAGAGLPDMEAVAGAEALNGQSDFPYLGAFPINPGLFIMTPAGVFLAESALHMAGLAEYPMQGELASAISSGKKKRKRCGMCAPCRRRINCEQCSSCRNRKTGHQICKFRKCEELKKKPSAALEKVMLPTGAAFRWFQ</sequence>
<gene>
    <name type="primary">CXXC5</name>
    <name type="ORF">HSPC195</name>
    <name type="ORF">TCCCIA00297</name>
</gene>
<name>CXXC5_HUMAN</name>
<dbReference type="EMBL" id="GQ379202">
    <property type="protein sequence ID" value="ACU80469.1"/>
    <property type="molecule type" value="mRNA"/>
</dbReference>
<dbReference type="EMBL" id="AB097005">
    <property type="protein sequence ID" value="BAC77358.1"/>
    <property type="molecule type" value="mRNA"/>
</dbReference>
<dbReference type="EMBL" id="AB097032">
    <property type="protein sequence ID" value="BAC77385.1"/>
    <property type="molecule type" value="mRNA"/>
</dbReference>
<dbReference type="EMBL" id="AK001782">
    <property type="protein sequence ID" value="BAA91907.1"/>
    <property type="molecule type" value="mRNA"/>
</dbReference>
<dbReference type="EMBL" id="AK024338">
    <property type="protein sequence ID" value="BAG51292.1"/>
    <property type="molecule type" value="mRNA"/>
</dbReference>
<dbReference type="EMBL" id="AY007103">
    <property type="protein sequence ID" value="AAG01986.1"/>
    <property type="molecule type" value="mRNA"/>
</dbReference>
<dbReference type="EMBL" id="AC113361">
    <property type="status" value="NOT_ANNOTATED_CDS"/>
    <property type="molecule type" value="Genomic_DNA"/>
</dbReference>
<dbReference type="EMBL" id="CH471062">
    <property type="protein sequence ID" value="EAW62090.1"/>
    <property type="molecule type" value="Genomic_DNA"/>
</dbReference>
<dbReference type="EMBL" id="CH471062">
    <property type="protein sequence ID" value="EAW62091.1"/>
    <property type="molecule type" value="Genomic_DNA"/>
</dbReference>
<dbReference type="EMBL" id="CH471062">
    <property type="protein sequence ID" value="EAW62092.1"/>
    <property type="molecule type" value="Genomic_DNA"/>
</dbReference>
<dbReference type="EMBL" id="CH471062">
    <property type="protein sequence ID" value="EAW62093.1"/>
    <property type="molecule type" value="Genomic_DNA"/>
</dbReference>
<dbReference type="EMBL" id="BC002490">
    <property type="protein sequence ID" value="AAH02490.3"/>
    <property type="status" value="ALT_INIT"/>
    <property type="molecule type" value="mRNA"/>
</dbReference>
<dbReference type="EMBL" id="BC006428">
    <property type="protein sequence ID" value="AAH06428.1"/>
    <property type="status" value="ALT_INIT"/>
    <property type="molecule type" value="mRNA"/>
</dbReference>
<dbReference type="EMBL" id="BC017439">
    <property type="protein sequence ID" value="AAH17439.2"/>
    <property type="status" value="ALT_INIT"/>
    <property type="molecule type" value="mRNA"/>
</dbReference>
<dbReference type="EMBL" id="BC024040">
    <property type="protein sequence ID" value="AAH24040.2"/>
    <property type="status" value="ALT_INIT"/>
    <property type="molecule type" value="mRNA"/>
</dbReference>
<dbReference type="EMBL" id="BC041013">
    <property type="protein sequence ID" value="AAH41013.2"/>
    <property type="status" value="ALT_INIT"/>
    <property type="molecule type" value="mRNA"/>
</dbReference>
<dbReference type="EMBL" id="AF151029">
    <property type="protein sequence ID" value="AAF36115.1"/>
    <property type="status" value="ALT_FRAME"/>
    <property type="molecule type" value="mRNA"/>
</dbReference>
<dbReference type="CCDS" id="CCDS43370.1">
    <molecule id="Q7LFL8-1"/>
</dbReference>
<dbReference type="RefSeq" id="NP_001304128.1">
    <molecule id="Q7LFL8-1"/>
    <property type="nucleotide sequence ID" value="NM_001317199.2"/>
</dbReference>
<dbReference type="RefSeq" id="NP_001304129.1">
    <molecule id="Q7LFL8-1"/>
    <property type="nucleotide sequence ID" value="NM_001317200.2"/>
</dbReference>
<dbReference type="RefSeq" id="NP_001304130.1">
    <molecule id="Q7LFL8-1"/>
    <property type="nucleotide sequence ID" value="NM_001317201.2"/>
</dbReference>
<dbReference type="RefSeq" id="NP_001304131.1">
    <molecule id="Q7LFL8-1"/>
    <property type="nucleotide sequence ID" value="NM_001317202.2"/>
</dbReference>
<dbReference type="RefSeq" id="NP_001304132.1">
    <molecule id="Q7LFL8-1"/>
    <property type="nucleotide sequence ID" value="NM_001317203.2"/>
</dbReference>
<dbReference type="RefSeq" id="NP_001304133.1">
    <molecule id="Q7LFL8-1"/>
    <property type="nucleotide sequence ID" value="NM_001317204.2"/>
</dbReference>
<dbReference type="RefSeq" id="NP_001304134.1">
    <molecule id="Q7LFL8-1"/>
    <property type="nucleotide sequence ID" value="NM_001317205.2"/>
</dbReference>
<dbReference type="RefSeq" id="NP_001304135.1">
    <molecule id="Q7LFL8-1"/>
    <property type="nucleotide sequence ID" value="NM_001317206.2"/>
</dbReference>
<dbReference type="RefSeq" id="NP_001304136.1">
    <molecule id="Q7LFL8-1"/>
    <property type="nucleotide sequence ID" value="NM_001317207.2"/>
</dbReference>
<dbReference type="RefSeq" id="NP_001304137.1">
    <molecule id="Q7LFL8-1"/>
    <property type="nucleotide sequence ID" value="NM_001317208.2"/>
</dbReference>
<dbReference type="RefSeq" id="NP_001304138.1">
    <molecule id="Q7LFL8-1"/>
    <property type="nucleotide sequence ID" value="NM_001317209.2"/>
</dbReference>
<dbReference type="RefSeq" id="NP_001304139.1">
    <molecule id="Q7LFL8-1"/>
    <property type="nucleotide sequence ID" value="NM_001317210.2"/>
</dbReference>
<dbReference type="RefSeq" id="NP_001304140.1">
    <molecule id="Q7LFL8-1"/>
    <property type="nucleotide sequence ID" value="NM_001317211.2"/>
</dbReference>
<dbReference type="RefSeq" id="NP_057547.5">
    <molecule id="Q7LFL8-1"/>
    <property type="nucleotide sequence ID" value="NM_016463.8"/>
</dbReference>
<dbReference type="RefSeq" id="XP_016865062.1">
    <property type="nucleotide sequence ID" value="XM_017009573.1"/>
</dbReference>
<dbReference type="RefSeq" id="XP_047273258.1">
    <molecule id="Q7LFL8-1"/>
    <property type="nucleotide sequence ID" value="XM_047417302.1"/>
</dbReference>
<dbReference type="RefSeq" id="XP_054208782.1">
    <molecule id="Q7LFL8-1"/>
    <property type="nucleotide sequence ID" value="XM_054352807.1"/>
</dbReference>
<dbReference type="PDB" id="5W9S">
    <property type="method" value="X-ray"/>
    <property type="resolution" value="2.10 A"/>
    <property type="chains" value="C=254-306"/>
</dbReference>
<dbReference type="PDBsum" id="5W9S"/>
<dbReference type="SMR" id="Q7LFL8"/>
<dbReference type="BioGRID" id="119586">
    <property type="interactions" value="19"/>
</dbReference>
<dbReference type="FunCoup" id="Q7LFL8">
    <property type="interactions" value="1800"/>
</dbReference>
<dbReference type="IntAct" id="Q7LFL8">
    <property type="interactions" value="16"/>
</dbReference>
<dbReference type="MINT" id="Q7LFL8"/>
<dbReference type="STRING" id="9606.ENSP00000302543"/>
<dbReference type="BindingDB" id="Q7LFL8"/>
<dbReference type="ChEMBL" id="CHEMBL5169170"/>
<dbReference type="GlyGen" id="Q7LFL8">
    <property type="glycosylation" value="2 sites, 1 O-linked glycan (2 sites)"/>
</dbReference>
<dbReference type="iPTMnet" id="Q7LFL8"/>
<dbReference type="PhosphoSitePlus" id="Q7LFL8"/>
<dbReference type="BioMuta" id="CXXC5"/>
<dbReference type="DMDM" id="167011303"/>
<dbReference type="jPOST" id="Q7LFL8"/>
<dbReference type="MassIVE" id="Q7LFL8"/>
<dbReference type="PaxDb" id="9606-ENSP00000302543"/>
<dbReference type="PeptideAtlas" id="Q7LFL8"/>
<dbReference type="ProteomicsDB" id="68856">
    <molecule id="Q7LFL8-1"/>
</dbReference>
<dbReference type="ProteomicsDB" id="68857">
    <molecule id="Q7LFL8-2"/>
</dbReference>
<dbReference type="Pumba" id="Q7LFL8"/>
<dbReference type="Antibodypedia" id="49849">
    <property type="antibodies" value="145 antibodies from 30 providers"/>
</dbReference>
<dbReference type="DNASU" id="51523"/>
<dbReference type="Ensembl" id="ENST00000302517.8">
    <molecule id="Q7LFL8-1"/>
    <property type="protein sequence ID" value="ENSP00000302543.3"/>
    <property type="gene ID" value="ENSG00000171604.12"/>
</dbReference>
<dbReference type="Ensembl" id="ENST00000511048.1">
    <molecule id="Q7LFL8-1"/>
    <property type="protein sequence ID" value="ENSP00000427379.1"/>
    <property type="gene ID" value="ENSG00000171604.12"/>
</dbReference>
<dbReference type="GeneID" id="51523"/>
<dbReference type="KEGG" id="hsa:51523"/>
<dbReference type="MANE-Select" id="ENST00000302517.8">
    <property type="protein sequence ID" value="ENSP00000302543.3"/>
    <property type="RefSeq nucleotide sequence ID" value="NM_016463.9"/>
    <property type="RefSeq protein sequence ID" value="NP_057547.5"/>
</dbReference>
<dbReference type="UCSC" id="uc003let.3">
    <molecule id="Q7LFL8-1"/>
    <property type="organism name" value="human"/>
</dbReference>
<dbReference type="AGR" id="HGNC:26943"/>
<dbReference type="CTD" id="51523"/>
<dbReference type="DisGeNET" id="51523"/>
<dbReference type="GeneCards" id="CXXC5"/>
<dbReference type="HGNC" id="HGNC:26943">
    <property type="gene designation" value="CXXC5"/>
</dbReference>
<dbReference type="HPA" id="ENSG00000171604">
    <property type="expression patterns" value="Tissue enhanced (brain)"/>
</dbReference>
<dbReference type="MIM" id="612752">
    <property type="type" value="gene"/>
</dbReference>
<dbReference type="neXtProt" id="NX_Q7LFL8"/>
<dbReference type="OpenTargets" id="ENSG00000171604"/>
<dbReference type="PharmGKB" id="PA128394661"/>
<dbReference type="VEuPathDB" id="HostDB:ENSG00000171604"/>
<dbReference type="eggNOG" id="ENOG502QT2M">
    <property type="taxonomic scope" value="Eukaryota"/>
</dbReference>
<dbReference type="GeneTree" id="ENSGT00940000154108"/>
<dbReference type="HOGENOM" id="CLU_074593_0_0_1"/>
<dbReference type="InParanoid" id="Q7LFL8"/>
<dbReference type="OMA" id="ANGHDPP"/>
<dbReference type="OrthoDB" id="8854879at2759"/>
<dbReference type="PAN-GO" id="Q7LFL8">
    <property type="GO annotations" value="2 GO annotations based on evolutionary models"/>
</dbReference>
<dbReference type="PhylomeDB" id="Q7LFL8"/>
<dbReference type="TreeFam" id="TF326617"/>
<dbReference type="PathwayCommons" id="Q7LFL8"/>
<dbReference type="Reactome" id="R-HSA-9018519">
    <property type="pathway name" value="Estrogen-dependent gene expression"/>
</dbReference>
<dbReference type="SignaLink" id="Q7LFL8"/>
<dbReference type="BioGRID-ORCS" id="51523">
    <property type="hits" value="17 hits in 1163 CRISPR screens"/>
</dbReference>
<dbReference type="ChiTaRS" id="CXXC5">
    <property type="organism name" value="human"/>
</dbReference>
<dbReference type="GeneWiki" id="CXXC5"/>
<dbReference type="GenomeRNAi" id="51523"/>
<dbReference type="Pharos" id="Q7LFL8">
    <property type="development level" value="Tbio"/>
</dbReference>
<dbReference type="PRO" id="PR:Q7LFL8"/>
<dbReference type="Proteomes" id="UP000005640">
    <property type="component" value="Chromosome 5"/>
</dbReference>
<dbReference type="RNAct" id="Q7LFL8">
    <property type="molecule type" value="protein"/>
</dbReference>
<dbReference type="Bgee" id="ENSG00000171604">
    <property type="expression patterns" value="Expressed in kidney epithelium and 190 other cell types or tissues"/>
</dbReference>
<dbReference type="ExpressionAtlas" id="Q7LFL8">
    <property type="expression patterns" value="baseline and differential"/>
</dbReference>
<dbReference type="GO" id="GO:0005829">
    <property type="term" value="C:cytosol"/>
    <property type="evidence" value="ECO:0000314"/>
    <property type="project" value="HPA"/>
</dbReference>
<dbReference type="GO" id="GO:0005654">
    <property type="term" value="C:nucleoplasm"/>
    <property type="evidence" value="ECO:0000314"/>
    <property type="project" value="HPA"/>
</dbReference>
<dbReference type="GO" id="GO:0005634">
    <property type="term" value="C:nucleus"/>
    <property type="evidence" value="ECO:0000318"/>
    <property type="project" value="GO_Central"/>
</dbReference>
<dbReference type="GO" id="GO:0140297">
    <property type="term" value="F:DNA-binding transcription factor binding"/>
    <property type="evidence" value="ECO:0000314"/>
    <property type="project" value="UniProtKB"/>
</dbReference>
<dbReference type="GO" id="GO:0008327">
    <property type="term" value="F:methyl-CpG binding"/>
    <property type="evidence" value="ECO:0000314"/>
    <property type="project" value="UniProtKB"/>
</dbReference>
<dbReference type="GO" id="GO:0043565">
    <property type="term" value="F:sequence-specific DNA binding"/>
    <property type="evidence" value="ECO:0000314"/>
    <property type="project" value="UniProtKB"/>
</dbReference>
<dbReference type="GO" id="GO:0008270">
    <property type="term" value="F:zinc ion binding"/>
    <property type="evidence" value="ECO:0000314"/>
    <property type="project" value="UniProtKB"/>
</dbReference>
<dbReference type="GO" id="GO:0000122">
    <property type="term" value="P:negative regulation of transcription by RNA polymerase II"/>
    <property type="evidence" value="ECO:0000314"/>
    <property type="project" value="UniProtKB"/>
</dbReference>
<dbReference type="GO" id="GO:0043123">
    <property type="term" value="P:positive regulation of canonical NF-kappaB signal transduction"/>
    <property type="evidence" value="ECO:0007001"/>
    <property type="project" value="UniProtKB"/>
</dbReference>
<dbReference type="GO" id="GO:0043467">
    <property type="term" value="P:regulation of generation of precursor metabolites and energy"/>
    <property type="evidence" value="ECO:0000314"/>
    <property type="project" value="UniProtKB"/>
</dbReference>
<dbReference type="InterPro" id="IPR040388">
    <property type="entry name" value="CXXC4/CXXC5"/>
</dbReference>
<dbReference type="InterPro" id="IPR002857">
    <property type="entry name" value="Znf_CXXC"/>
</dbReference>
<dbReference type="PANTHER" id="PTHR13419:SF2">
    <property type="entry name" value="CXXC-TYPE ZINC FINGER PROTEIN 5"/>
    <property type="match status" value="1"/>
</dbReference>
<dbReference type="PANTHER" id="PTHR13419">
    <property type="entry name" value="ZINC FINGER-CONTAINING"/>
    <property type="match status" value="1"/>
</dbReference>
<dbReference type="Pfam" id="PF02008">
    <property type="entry name" value="zf-CXXC"/>
    <property type="match status" value="1"/>
</dbReference>
<dbReference type="PROSITE" id="PS51058">
    <property type="entry name" value="ZF_CXXC"/>
    <property type="match status" value="1"/>
</dbReference>
<evidence type="ECO:0000250" key="1">
    <source>
        <dbReference type="UniProtKB" id="Q5XIQ3"/>
    </source>
</evidence>
<evidence type="ECO:0000255" key="2"/>
<evidence type="ECO:0000255" key="3">
    <source>
        <dbReference type="PROSITE-ProRule" id="PRU00509"/>
    </source>
</evidence>
<evidence type="ECO:0000256" key="4">
    <source>
        <dbReference type="SAM" id="MobiDB-lite"/>
    </source>
</evidence>
<evidence type="ECO:0000269" key="5">
    <source>
    </source>
</evidence>
<evidence type="ECO:0000269" key="6">
    <source>
    </source>
</evidence>
<evidence type="ECO:0000269" key="7">
    <source>
    </source>
</evidence>
<evidence type="ECO:0000269" key="8">
    <source>
    </source>
</evidence>
<evidence type="ECO:0000303" key="9">
    <source>
    </source>
</evidence>
<evidence type="ECO:0000303" key="10">
    <source ref="4"/>
</evidence>
<evidence type="ECO:0000305" key="11"/>
<evidence type="ECO:0007744" key="12">
    <source>
        <dbReference type="PDB" id="5W9S"/>
    </source>
</evidence>
<evidence type="ECO:0007744" key="13">
    <source>
    </source>
</evidence>
<evidence type="ECO:0007829" key="14">
    <source>
        <dbReference type="PDB" id="5W9S"/>
    </source>
</evidence>
<protein>
    <recommendedName>
        <fullName>CXXC-type zinc finger protein 5</fullName>
        <shortName>CF5</shortName>
    </recommendedName>
    <alternativeName>
        <fullName>Putative MAPK-activating protein PM08</fullName>
    </alternativeName>
    <alternativeName>
        <fullName>Putative NF-kappa-B-activating protein 102</fullName>
    </alternativeName>
    <alternativeName>
        <fullName>Retinoid-inducible nuclear factor</fullName>
        <shortName>RINF</shortName>
    </alternativeName>
</protein>
<accession>Q7LFL8</accession>
<accession>B3KND0</accession>
<accession>C8CBA8</accession>
<accession>Q8TB79</accession>
<accession>Q9NV51</accession>
<accession>Q9P0S8</accession>
<feature type="chain" id="PRO_0000317548" description="CXXC-type zinc finger protein 5">
    <location>
        <begin position="1"/>
        <end position="322"/>
    </location>
</feature>
<feature type="zinc finger region" description="CXXC-type" evidence="3 8">
    <location>
        <begin position="256"/>
        <end position="297"/>
    </location>
</feature>
<feature type="region of interest" description="Disordered" evidence="4">
    <location>
        <begin position="1"/>
        <end position="100"/>
    </location>
</feature>
<feature type="short sequence motif" description="Nuclear localization signal" evidence="2">
    <location>
        <begin position="257"/>
        <end position="262"/>
    </location>
</feature>
<feature type="compositionally biased region" description="Gly residues" evidence="4">
    <location>
        <begin position="1"/>
        <end position="10"/>
    </location>
</feature>
<feature type="compositionally biased region" description="Low complexity" evidence="4">
    <location>
        <begin position="11"/>
        <end position="20"/>
    </location>
</feature>
<feature type="compositionally biased region" description="Low complexity" evidence="4">
    <location>
        <begin position="28"/>
        <end position="52"/>
    </location>
</feature>
<feature type="compositionally biased region" description="Gly residues" evidence="4">
    <location>
        <begin position="87"/>
        <end position="97"/>
    </location>
</feature>
<feature type="binding site" evidence="3 8 12">
    <location>
        <position position="263"/>
    </location>
    <ligand>
        <name>Zn(2+)</name>
        <dbReference type="ChEBI" id="CHEBI:29105"/>
        <label>1</label>
    </ligand>
</feature>
<feature type="binding site" evidence="3 8 12">
    <location>
        <position position="266"/>
    </location>
    <ligand>
        <name>Zn(2+)</name>
        <dbReference type="ChEBI" id="CHEBI:29105"/>
        <label>1</label>
    </ligand>
</feature>
<feature type="binding site" evidence="3 8 12">
    <location>
        <position position="269"/>
    </location>
    <ligand>
        <name>Zn(2+)</name>
        <dbReference type="ChEBI" id="CHEBI:29105"/>
        <label>1</label>
    </ligand>
</feature>
<feature type="binding site" evidence="3 8 12">
    <location>
        <position position="275"/>
    </location>
    <ligand>
        <name>Zn(2+)</name>
        <dbReference type="ChEBI" id="CHEBI:29105"/>
        <label>2</label>
    </ligand>
</feature>
<feature type="binding site" evidence="3 8 12">
    <location>
        <position position="278"/>
    </location>
    <ligand>
        <name>Zn(2+)</name>
        <dbReference type="ChEBI" id="CHEBI:29105"/>
        <label>2</label>
    </ligand>
</feature>
<feature type="binding site" evidence="3 8 12">
    <location>
        <position position="281"/>
    </location>
    <ligand>
        <name>Zn(2+)</name>
        <dbReference type="ChEBI" id="CHEBI:29105"/>
        <label>2</label>
    </ligand>
</feature>
<feature type="binding site" evidence="3 8 12">
    <location>
        <position position="291"/>
    </location>
    <ligand>
        <name>Zn(2+)</name>
        <dbReference type="ChEBI" id="CHEBI:29105"/>
        <label>2</label>
    </ligand>
</feature>
<feature type="binding site" evidence="3 8 12">
    <location>
        <position position="296"/>
    </location>
    <ligand>
        <name>Zn(2+)</name>
        <dbReference type="ChEBI" id="CHEBI:29105"/>
        <label>1</label>
    </ligand>
</feature>
<feature type="modified residue" description="Phosphothreonine" evidence="13">
    <location>
        <position position="53"/>
    </location>
</feature>
<feature type="splice variant" id="VSP_031013" description="In isoform 2." evidence="9 10">
    <location>
        <begin position="1"/>
        <end position="95"/>
    </location>
</feature>
<feature type="sequence conflict" description="In Ref. 8; AAF36115." evidence="11" ref="8">
    <original>AA</original>
    <variation>WP</variation>
    <location>
        <begin position="111"/>
        <end position="112"/>
    </location>
</feature>
<feature type="helix" evidence="14">
    <location>
        <begin position="267"/>
        <end position="270"/>
    </location>
</feature>
<feature type="strand" evidence="14">
    <location>
        <begin position="276"/>
        <end position="278"/>
    </location>
</feature>
<feature type="helix" evidence="14">
    <location>
        <begin position="279"/>
        <end position="282"/>
    </location>
</feature>
<feature type="helix" evidence="14">
    <location>
        <begin position="284"/>
        <end position="287"/>
    </location>
</feature>
<feature type="turn" evidence="14">
    <location>
        <begin position="292"/>
        <end position="294"/>
    </location>
</feature>
<feature type="helix" evidence="14">
    <location>
        <begin position="297"/>
        <end position="299"/>
    </location>
</feature>